<evidence type="ECO:0000255" key="1">
    <source>
        <dbReference type="HAMAP-Rule" id="MF_00097"/>
    </source>
</evidence>
<organism>
    <name type="scientific">Pseudomonas putida (strain ATCC 47054 / DSM 6125 / CFBP 8728 / NCIMB 11950 / KT2440)</name>
    <dbReference type="NCBI Taxonomy" id="160488"/>
    <lineage>
        <taxon>Bacteria</taxon>
        <taxon>Pseudomonadati</taxon>
        <taxon>Pseudomonadota</taxon>
        <taxon>Gammaproteobacteria</taxon>
        <taxon>Pseudomonadales</taxon>
        <taxon>Pseudomonadaceae</taxon>
        <taxon>Pseudomonas</taxon>
    </lineage>
</organism>
<reference key="1">
    <citation type="journal article" date="2002" name="Environ. Microbiol.">
        <title>Complete genome sequence and comparative analysis of the metabolically versatile Pseudomonas putida KT2440.</title>
        <authorList>
            <person name="Nelson K.E."/>
            <person name="Weinel C."/>
            <person name="Paulsen I.T."/>
            <person name="Dodson R.J."/>
            <person name="Hilbert H."/>
            <person name="Martins dos Santos V.A.P."/>
            <person name="Fouts D.E."/>
            <person name="Gill S.R."/>
            <person name="Pop M."/>
            <person name="Holmes M."/>
            <person name="Brinkac L.M."/>
            <person name="Beanan M.J."/>
            <person name="DeBoy R.T."/>
            <person name="Daugherty S.C."/>
            <person name="Kolonay J.F."/>
            <person name="Madupu R."/>
            <person name="Nelson W.C."/>
            <person name="White O."/>
            <person name="Peterson J.D."/>
            <person name="Khouri H.M."/>
            <person name="Hance I."/>
            <person name="Chris Lee P."/>
            <person name="Holtzapple E.K."/>
            <person name="Scanlan D."/>
            <person name="Tran K."/>
            <person name="Moazzez A."/>
            <person name="Utterback T.R."/>
            <person name="Rizzo M."/>
            <person name="Lee K."/>
            <person name="Kosack D."/>
            <person name="Moestl D."/>
            <person name="Wedler H."/>
            <person name="Lauber J."/>
            <person name="Stjepandic D."/>
            <person name="Hoheisel J."/>
            <person name="Straetz M."/>
            <person name="Heim S."/>
            <person name="Kiewitz C."/>
            <person name="Eisen J.A."/>
            <person name="Timmis K.N."/>
            <person name="Duesterhoeft A."/>
            <person name="Tuemmler B."/>
            <person name="Fraser C.M."/>
        </authorList>
    </citation>
    <scope>NUCLEOTIDE SEQUENCE [LARGE SCALE GENOMIC DNA]</scope>
    <source>
        <strain>ATCC 47054 / DSM 6125 / CFBP 8728 / NCIMB 11950 / KT2440</strain>
    </source>
</reference>
<feature type="chain" id="PRO_0000157036" description="Thiamine-phosphate synthase">
    <location>
        <begin position="1"/>
        <end position="207"/>
    </location>
</feature>
<feature type="binding site" evidence="1">
    <location>
        <begin position="35"/>
        <end position="39"/>
    </location>
    <ligand>
        <name>4-amino-2-methyl-5-(diphosphooxymethyl)pyrimidine</name>
        <dbReference type="ChEBI" id="CHEBI:57841"/>
    </ligand>
</feature>
<feature type="binding site" evidence="1">
    <location>
        <position position="67"/>
    </location>
    <ligand>
        <name>4-amino-2-methyl-5-(diphosphooxymethyl)pyrimidine</name>
        <dbReference type="ChEBI" id="CHEBI:57841"/>
    </ligand>
</feature>
<feature type="binding site" evidence="1">
    <location>
        <position position="68"/>
    </location>
    <ligand>
        <name>Mg(2+)</name>
        <dbReference type="ChEBI" id="CHEBI:18420"/>
    </ligand>
</feature>
<feature type="binding site" evidence="1">
    <location>
        <position position="86"/>
    </location>
    <ligand>
        <name>Mg(2+)</name>
        <dbReference type="ChEBI" id="CHEBI:18420"/>
    </ligand>
</feature>
<feature type="binding site" evidence="1">
    <location>
        <position position="105"/>
    </location>
    <ligand>
        <name>4-amino-2-methyl-5-(diphosphooxymethyl)pyrimidine</name>
        <dbReference type="ChEBI" id="CHEBI:57841"/>
    </ligand>
</feature>
<feature type="binding site" evidence="1">
    <location>
        <begin position="132"/>
        <end position="134"/>
    </location>
    <ligand>
        <name>2-[(2R,5Z)-2-carboxy-4-methylthiazol-5(2H)-ylidene]ethyl phosphate</name>
        <dbReference type="ChEBI" id="CHEBI:62899"/>
    </ligand>
</feature>
<feature type="binding site" evidence="1">
    <location>
        <position position="135"/>
    </location>
    <ligand>
        <name>4-amino-2-methyl-5-(diphosphooxymethyl)pyrimidine</name>
        <dbReference type="ChEBI" id="CHEBI:57841"/>
    </ligand>
</feature>
<feature type="binding site" evidence="1">
    <location>
        <position position="162"/>
    </location>
    <ligand>
        <name>2-[(2R,5Z)-2-carboxy-4-methylthiazol-5(2H)-ylidene]ethyl phosphate</name>
        <dbReference type="ChEBI" id="CHEBI:62899"/>
    </ligand>
</feature>
<proteinExistence type="inferred from homology"/>
<dbReference type="EC" id="2.5.1.3" evidence="1"/>
<dbReference type="EMBL" id="AE015451">
    <property type="protein sequence ID" value="AAN70352.1"/>
    <property type="molecule type" value="Genomic_DNA"/>
</dbReference>
<dbReference type="RefSeq" id="NP_746888.1">
    <property type="nucleotide sequence ID" value="NC_002947.4"/>
</dbReference>
<dbReference type="RefSeq" id="WP_010955405.1">
    <property type="nucleotide sequence ID" value="NZ_CP169744.1"/>
</dbReference>
<dbReference type="SMR" id="Q88DP1"/>
<dbReference type="STRING" id="160488.PP_4783"/>
<dbReference type="PaxDb" id="160488-PP_4783"/>
<dbReference type="GeneID" id="83682510"/>
<dbReference type="KEGG" id="ppu:PP_4783"/>
<dbReference type="PATRIC" id="fig|160488.4.peg.5102"/>
<dbReference type="eggNOG" id="COG0352">
    <property type="taxonomic scope" value="Bacteria"/>
</dbReference>
<dbReference type="HOGENOM" id="CLU_018272_3_1_6"/>
<dbReference type="OrthoDB" id="9789949at2"/>
<dbReference type="PhylomeDB" id="Q88DP1"/>
<dbReference type="BioCyc" id="PPUT160488:G1G01-5120-MONOMER"/>
<dbReference type="UniPathway" id="UPA00060">
    <property type="reaction ID" value="UER00141"/>
</dbReference>
<dbReference type="Proteomes" id="UP000000556">
    <property type="component" value="Chromosome"/>
</dbReference>
<dbReference type="GO" id="GO:0005737">
    <property type="term" value="C:cytoplasm"/>
    <property type="evidence" value="ECO:0007669"/>
    <property type="project" value="TreeGrafter"/>
</dbReference>
<dbReference type="GO" id="GO:0000287">
    <property type="term" value="F:magnesium ion binding"/>
    <property type="evidence" value="ECO:0007669"/>
    <property type="project" value="UniProtKB-UniRule"/>
</dbReference>
<dbReference type="GO" id="GO:0004789">
    <property type="term" value="F:thiamine-phosphate diphosphorylase activity"/>
    <property type="evidence" value="ECO:0007669"/>
    <property type="project" value="UniProtKB-UniRule"/>
</dbReference>
<dbReference type="GO" id="GO:0009228">
    <property type="term" value="P:thiamine biosynthetic process"/>
    <property type="evidence" value="ECO:0007669"/>
    <property type="project" value="UniProtKB-KW"/>
</dbReference>
<dbReference type="GO" id="GO:0009229">
    <property type="term" value="P:thiamine diphosphate biosynthetic process"/>
    <property type="evidence" value="ECO:0007669"/>
    <property type="project" value="UniProtKB-UniRule"/>
</dbReference>
<dbReference type="CDD" id="cd00564">
    <property type="entry name" value="TMP_TenI"/>
    <property type="match status" value="1"/>
</dbReference>
<dbReference type="Gene3D" id="3.20.20.70">
    <property type="entry name" value="Aldolase class I"/>
    <property type="match status" value="1"/>
</dbReference>
<dbReference type="HAMAP" id="MF_00097">
    <property type="entry name" value="TMP_synthase"/>
    <property type="match status" value="1"/>
</dbReference>
<dbReference type="InterPro" id="IPR013785">
    <property type="entry name" value="Aldolase_TIM"/>
</dbReference>
<dbReference type="InterPro" id="IPR036206">
    <property type="entry name" value="ThiamineP_synth_sf"/>
</dbReference>
<dbReference type="InterPro" id="IPR022998">
    <property type="entry name" value="ThiamineP_synth_TenI"/>
</dbReference>
<dbReference type="InterPro" id="IPR034291">
    <property type="entry name" value="TMP_synthase"/>
</dbReference>
<dbReference type="NCBIfam" id="TIGR00693">
    <property type="entry name" value="thiE"/>
    <property type="match status" value="1"/>
</dbReference>
<dbReference type="PANTHER" id="PTHR20857">
    <property type="entry name" value="THIAMINE-PHOSPHATE PYROPHOSPHORYLASE"/>
    <property type="match status" value="1"/>
</dbReference>
<dbReference type="PANTHER" id="PTHR20857:SF15">
    <property type="entry name" value="THIAMINE-PHOSPHATE SYNTHASE"/>
    <property type="match status" value="1"/>
</dbReference>
<dbReference type="Pfam" id="PF02581">
    <property type="entry name" value="TMP-TENI"/>
    <property type="match status" value="1"/>
</dbReference>
<dbReference type="SUPFAM" id="SSF51391">
    <property type="entry name" value="Thiamin phosphate synthase"/>
    <property type="match status" value="1"/>
</dbReference>
<comment type="function">
    <text evidence="1">Condenses 4-methyl-5-(beta-hydroxyethyl)thiazole monophosphate (THZ-P) and 2-methyl-4-amino-5-hydroxymethyl pyrimidine pyrophosphate (HMP-PP) to form thiamine monophosphate (TMP).</text>
</comment>
<comment type="catalytic activity">
    <reaction evidence="1">
        <text>2-[(2R,5Z)-2-carboxy-4-methylthiazol-5(2H)-ylidene]ethyl phosphate + 4-amino-2-methyl-5-(diphosphooxymethyl)pyrimidine + 2 H(+) = thiamine phosphate + CO2 + diphosphate</text>
        <dbReference type="Rhea" id="RHEA:47844"/>
        <dbReference type="ChEBI" id="CHEBI:15378"/>
        <dbReference type="ChEBI" id="CHEBI:16526"/>
        <dbReference type="ChEBI" id="CHEBI:33019"/>
        <dbReference type="ChEBI" id="CHEBI:37575"/>
        <dbReference type="ChEBI" id="CHEBI:57841"/>
        <dbReference type="ChEBI" id="CHEBI:62899"/>
        <dbReference type="EC" id="2.5.1.3"/>
    </reaction>
</comment>
<comment type="catalytic activity">
    <reaction evidence="1">
        <text>2-(2-carboxy-4-methylthiazol-5-yl)ethyl phosphate + 4-amino-2-methyl-5-(diphosphooxymethyl)pyrimidine + 2 H(+) = thiamine phosphate + CO2 + diphosphate</text>
        <dbReference type="Rhea" id="RHEA:47848"/>
        <dbReference type="ChEBI" id="CHEBI:15378"/>
        <dbReference type="ChEBI" id="CHEBI:16526"/>
        <dbReference type="ChEBI" id="CHEBI:33019"/>
        <dbReference type="ChEBI" id="CHEBI:37575"/>
        <dbReference type="ChEBI" id="CHEBI:57841"/>
        <dbReference type="ChEBI" id="CHEBI:62890"/>
        <dbReference type="EC" id="2.5.1.3"/>
    </reaction>
</comment>
<comment type="catalytic activity">
    <reaction evidence="1">
        <text>4-methyl-5-(2-phosphooxyethyl)-thiazole + 4-amino-2-methyl-5-(diphosphooxymethyl)pyrimidine + H(+) = thiamine phosphate + diphosphate</text>
        <dbReference type="Rhea" id="RHEA:22328"/>
        <dbReference type="ChEBI" id="CHEBI:15378"/>
        <dbReference type="ChEBI" id="CHEBI:33019"/>
        <dbReference type="ChEBI" id="CHEBI:37575"/>
        <dbReference type="ChEBI" id="CHEBI:57841"/>
        <dbReference type="ChEBI" id="CHEBI:58296"/>
        <dbReference type="EC" id="2.5.1.3"/>
    </reaction>
</comment>
<comment type="cofactor">
    <cofactor evidence="1">
        <name>Mg(2+)</name>
        <dbReference type="ChEBI" id="CHEBI:18420"/>
    </cofactor>
    <text evidence="1">Binds 1 Mg(2+) ion per subunit.</text>
</comment>
<comment type="pathway">
    <text evidence="1">Cofactor biosynthesis; thiamine diphosphate biosynthesis; thiamine phosphate from 4-amino-2-methyl-5-diphosphomethylpyrimidine and 4-methyl-5-(2-phosphoethyl)-thiazole: step 1/1.</text>
</comment>
<comment type="similarity">
    <text evidence="1">Belongs to the thiamine-phosphate synthase family.</text>
</comment>
<name>THIE_PSEPK</name>
<protein>
    <recommendedName>
        <fullName evidence="1">Thiamine-phosphate synthase</fullName>
        <shortName evidence="1">TP synthase</shortName>
        <shortName evidence="1">TPS</shortName>
        <ecNumber evidence="1">2.5.1.3</ecNumber>
    </recommendedName>
    <alternativeName>
        <fullName evidence="1">Thiamine-phosphate pyrophosphorylase</fullName>
        <shortName evidence="1">TMP pyrophosphorylase</shortName>
        <shortName evidence="1">TMP-PPase</shortName>
    </alternativeName>
</protein>
<keyword id="KW-0460">Magnesium</keyword>
<keyword id="KW-0479">Metal-binding</keyword>
<keyword id="KW-1185">Reference proteome</keyword>
<keyword id="KW-0784">Thiamine biosynthesis</keyword>
<keyword id="KW-0808">Transferase</keyword>
<gene>
    <name evidence="1" type="primary">thiE</name>
    <name type="ordered locus">PP_4783</name>
</gene>
<accession>Q88DP1</accession>
<sequence length="207" mass="21702">MKLRGLYAITDSQLLAGRFLSHVEAALEGGVCLLQYRDKTDDAARRLREAEGLMKLCERYGTQLLINDDAELAARLGVGVHLGQTDGPLTPARALLGRQAIIGSTCHASLELAAQAASEGASYVAFGRFFNSVTKPGAPAANVGLLEQARAQVKLPIAVIGGITLDNAAPLVAHGADLLAVIHGLFGADSAQEVTRRARAFNALFAS</sequence>